<keyword id="KW-0165">Cleavage on pair of basic residues</keyword>
<keyword id="KW-0180">Complement pathway</keyword>
<keyword id="KW-0903">Direct protein sequencing</keyword>
<keyword id="KW-1015">Disulfide bond</keyword>
<keyword id="KW-0325">Glycoprotein</keyword>
<keyword id="KW-0391">Immunity</keyword>
<keyword id="KW-0395">Inflammatory response</keyword>
<keyword id="KW-0399">Innate immunity</keyword>
<keyword id="KW-0597">Phosphoprotein</keyword>
<keyword id="KW-1185">Reference proteome</keyword>
<keyword id="KW-0964">Secreted</keyword>
<keyword id="KW-0732">Signal</keyword>
<keyword id="KW-0765">Sulfation</keyword>
<keyword id="KW-0882">Thioester bond</keyword>
<dbReference type="EMBL" id="GJ062795">
    <property type="protein sequence ID" value="DAA16335.1"/>
    <property type="molecule type" value="Genomic_DNA"/>
</dbReference>
<dbReference type="EMBL" id="U16750">
    <property type="protein sequence ID" value="AAA52751.1"/>
    <property type="molecule type" value="mRNA"/>
</dbReference>
<dbReference type="EMBL" id="U16749">
    <property type="protein sequence ID" value="AAA52750.1"/>
    <property type="molecule type" value="mRNA"/>
</dbReference>
<dbReference type="PIR" id="A01265">
    <property type="entry name" value="A01265"/>
</dbReference>
<dbReference type="STRING" id="9913.ENSBTAP00000009019"/>
<dbReference type="MEROPS" id="I39.951"/>
<dbReference type="GlyCosmos" id="P01030">
    <property type="glycosylation" value="2 sites, No reported glycans"/>
</dbReference>
<dbReference type="GlyGen" id="P01030">
    <property type="glycosylation" value="2 sites"/>
</dbReference>
<dbReference type="PeptideAtlas" id="P01030"/>
<dbReference type="eggNOG" id="KOG1366">
    <property type="taxonomic scope" value="Eukaryota"/>
</dbReference>
<dbReference type="InParanoid" id="P01030"/>
<dbReference type="Proteomes" id="UP000009136">
    <property type="component" value="Unplaced"/>
</dbReference>
<dbReference type="GO" id="GO:0030424">
    <property type="term" value="C:axon"/>
    <property type="evidence" value="ECO:0007669"/>
    <property type="project" value="UniProtKB-SubCell"/>
</dbReference>
<dbReference type="GO" id="GO:0030425">
    <property type="term" value="C:dendrite"/>
    <property type="evidence" value="ECO:0007669"/>
    <property type="project" value="UniProtKB-SubCell"/>
</dbReference>
<dbReference type="GO" id="GO:0005615">
    <property type="term" value="C:extracellular space"/>
    <property type="evidence" value="ECO:0000318"/>
    <property type="project" value="GO_Central"/>
</dbReference>
<dbReference type="GO" id="GO:0045202">
    <property type="term" value="C:synapse"/>
    <property type="evidence" value="ECO:0007669"/>
    <property type="project" value="UniProtKB-SubCell"/>
</dbReference>
<dbReference type="GO" id="GO:0006956">
    <property type="term" value="P:complement activation"/>
    <property type="evidence" value="ECO:0000318"/>
    <property type="project" value="GO_Central"/>
</dbReference>
<dbReference type="GO" id="GO:0006958">
    <property type="term" value="P:complement activation, classical pathway"/>
    <property type="evidence" value="ECO:0007669"/>
    <property type="project" value="UniProtKB-KW"/>
</dbReference>
<dbReference type="GO" id="GO:0006954">
    <property type="term" value="P:inflammatory response"/>
    <property type="evidence" value="ECO:0007669"/>
    <property type="project" value="UniProtKB-KW"/>
</dbReference>
<dbReference type="GO" id="GO:0045087">
    <property type="term" value="P:innate immune response"/>
    <property type="evidence" value="ECO:0007669"/>
    <property type="project" value="UniProtKB-KW"/>
</dbReference>
<dbReference type="CDD" id="cd00017">
    <property type="entry name" value="ANATO"/>
    <property type="match status" value="1"/>
</dbReference>
<dbReference type="CDD" id="cd02896">
    <property type="entry name" value="complement_C3_C4_C5"/>
    <property type="match status" value="1"/>
</dbReference>
<dbReference type="FunFam" id="2.60.40.690:FF:000002">
    <property type="entry name" value="Complement C4 isoform-A"/>
    <property type="match status" value="1"/>
</dbReference>
<dbReference type="FunFam" id="1.50.10.20:FF:000010">
    <property type="entry name" value="Complement C4-A"/>
    <property type="match status" value="1"/>
</dbReference>
<dbReference type="FunFam" id="2.40.50.120:FF:000009">
    <property type="entry name" value="Complement C4-A"/>
    <property type="match status" value="1"/>
</dbReference>
<dbReference type="FunFam" id="2.60.120.1540:FF:000001">
    <property type="entry name" value="Complement C4-A"/>
    <property type="match status" value="1"/>
</dbReference>
<dbReference type="FunFam" id="2.60.120.1540:FF:000006">
    <property type="entry name" value="MHC-linked complement C4"/>
    <property type="match status" value="1"/>
</dbReference>
<dbReference type="Gene3D" id="1.50.10.20">
    <property type="match status" value="1"/>
</dbReference>
<dbReference type="Gene3D" id="2.40.50.120">
    <property type="match status" value="1"/>
</dbReference>
<dbReference type="Gene3D" id="2.60.120.1540">
    <property type="match status" value="1"/>
</dbReference>
<dbReference type="Gene3D" id="2.60.40.690">
    <property type="entry name" value="Alpha-macroglobulin, receptor-binding domain"/>
    <property type="match status" value="1"/>
</dbReference>
<dbReference type="Gene3D" id="1.20.91.20">
    <property type="entry name" value="Anaphylotoxins (complement system)"/>
    <property type="match status" value="1"/>
</dbReference>
<dbReference type="InterPro" id="IPR009048">
    <property type="entry name" value="A-macroglobulin_rcpt-bd"/>
</dbReference>
<dbReference type="InterPro" id="IPR036595">
    <property type="entry name" value="A-macroglobulin_rcpt-bd_sf"/>
</dbReference>
<dbReference type="InterPro" id="IPR050473">
    <property type="entry name" value="A2M/Complement_sys"/>
</dbReference>
<dbReference type="InterPro" id="IPR047565">
    <property type="entry name" value="Alpha-macroglob_thiol-ester_cl"/>
</dbReference>
<dbReference type="InterPro" id="IPR011626">
    <property type="entry name" value="Alpha-macroglobulin_TED"/>
</dbReference>
<dbReference type="InterPro" id="IPR000020">
    <property type="entry name" value="Anaphylatoxin/fibulin"/>
</dbReference>
<dbReference type="InterPro" id="IPR018081">
    <property type="entry name" value="Anaphylatoxin_comp_syst"/>
</dbReference>
<dbReference type="InterPro" id="IPR001840">
    <property type="entry name" value="Anaphylatoxn_comp_syst_dom"/>
</dbReference>
<dbReference type="InterPro" id="IPR054587">
    <property type="entry name" value="CO4A-B_CUB_C"/>
</dbReference>
<dbReference type="InterPro" id="IPR019742">
    <property type="entry name" value="MacrogloblnA2_CS"/>
</dbReference>
<dbReference type="InterPro" id="IPR001134">
    <property type="entry name" value="Netrin_domain"/>
</dbReference>
<dbReference type="InterPro" id="IPR018933">
    <property type="entry name" value="Netrin_module_non-TIMP"/>
</dbReference>
<dbReference type="InterPro" id="IPR008930">
    <property type="entry name" value="Terpenoid_cyclase/PrenylTrfase"/>
</dbReference>
<dbReference type="InterPro" id="IPR008993">
    <property type="entry name" value="TIMP-like_OB-fold"/>
</dbReference>
<dbReference type="PANTHER" id="PTHR11412:SF86">
    <property type="entry name" value="COMPLEMENT C4-A-RELATED"/>
    <property type="match status" value="1"/>
</dbReference>
<dbReference type="PANTHER" id="PTHR11412">
    <property type="entry name" value="MACROGLOBULIN / COMPLEMENT"/>
    <property type="match status" value="1"/>
</dbReference>
<dbReference type="Pfam" id="PF07677">
    <property type="entry name" value="A2M_recep"/>
    <property type="match status" value="1"/>
</dbReference>
<dbReference type="Pfam" id="PF01821">
    <property type="entry name" value="ANATO"/>
    <property type="match status" value="1"/>
</dbReference>
<dbReference type="Pfam" id="PF22661">
    <property type="entry name" value="CO4A-B_CUB_C"/>
    <property type="match status" value="1"/>
</dbReference>
<dbReference type="Pfam" id="PF01759">
    <property type="entry name" value="NTR"/>
    <property type="match status" value="1"/>
</dbReference>
<dbReference type="Pfam" id="PF07678">
    <property type="entry name" value="TED_complement"/>
    <property type="match status" value="1"/>
</dbReference>
<dbReference type="PRINTS" id="PR00004">
    <property type="entry name" value="ANAPHYLATOXN"/>
</dbReference>
<dbReference type="SMART" id="SM01361">
    <property type="entry name" value="A2M_recep"/>
    <property type="match status" value="1"/>
</dbReference>
<dbReference type="SMART" id="SM00104">
    <property type="entry name" value="ANATO"/>
    <property type="match status" value="1"/>
</dbReference>
<dbReference type="SMART" id="SM00643">
    <property type="entry name" value="C345C"/>
    <property type="match status" value="1"/>
</dbReference>
<dbReference type="SMART" id="SM01419">
    <property type="entry name" value="Thiol-ester_cl"/>
    <property type="match status" value="1"/>
</dbReference>
<dbReference type="SUPFAM" id="SSF49410">
    <property type="entry name" value="Alpha-macroglobulin receptor domain"/>
    <property type="match status" value="1"/>
</dbReference>
<dbReference type="SUPFAM" id="SSF47686">
    <property type="entry name" value="Anaphylotoxins (complement system)"/>
    <property type="match status" value="1"/>
</dbReference>
<dbReference type="SUPFAM" id="SSF48239">
    <property type="entry name" value="Terpenoid cyclases/Protein prenyltransferases"/>
    <property type="match status" value="1"/>
</dbReference>
<dbReference type="SUPFAM" id="SSF50242">
    <property type="entry name" value="TIMP-like"/>
    <property type="match status" value="1"/>
</dbReference>
<dbReference type="PROSITE" id="PS00477">
    <property type="entry name" value="ALPHA_2_MACROGLOBULIN"/>
    <property type="match status" value="1"/>
</dbReference>
<dbReference type="PROSITE" id="PS01177">
    <property type="entry name" value="ANAPHYLATOXIN_1"/>
    <property type="match status" value="1"/>
</dbReference>
<dbReference type="PROSITE" id="PS01178">
    <property type="entry name" value="ANAPHYLATOXIN_2"/>
    <property type="match status" value="1"/>
</dbReference>
<dbReference type="PROSITE" id="PS50189">
    <property type="entry name" value="NTR"/>
    <property type="match status" value="1"/>
</dbReference>
<gene>
    <name type="primary">C4</name>
</gene>
<sequence length="1741" mass="192797">MRLLWGLIWASCFFALSLQKPRLLLFSPSVVRIGVPLSVAVKLQDAPSGQVVRGSVFLRNPSHVNELCSPKVDFSLSSDRDFILLNVPIPQAQARICFLHLRRVPEVQLMVQSSWLRDSLSKQTDMQGVNLLFSSRRGHLFLQTDQPVYNPGQRVRYRVFALDQKMRPATDILTVTVENSQGFRVQKREVFAPFSIFQDSFLIPDISEPGTWKISARFSDSLDSNSSTQFEVKKYVLPNFEVKIIPENPYILTTPGFLSDIQVIIQARYIYGKPVQGVAYVRFGLLGEDGEKTFLRGLESQTKLVDGQCQISLQKAEFQGVLEKLNISTDDLPGLRLYVAAAVIESPGGEMEEAELTSWRFMSSPFSLDLSKTKQQLIPGVPFLLQALVRDMSGSPASSIPVKVSAKLFSGSTSKNQDFEQNTDGSGQVIVSIGVPRTISEVQLSVSAGSPYPAVGSLTVKAPLSRSSGFLSIEWQNPRPLKVGETLKLNLQAVGISGSFSYFYYMIVSRGQIVSVHREPRSHLTSISVFVDHHLVPSFHLVAFYYHGGVPVANSLRVDVQAGGCEGKLELNVDSSKAYRPGDTVKLNLKTESRALVALGAVDTALYAVGGKSHKPLDMVKVFEAMNSYDLGCGPGGGDTAPQVFKAAGLAFSDGDHRTEIRKSLSCPKESKSRKKRNVNFQKAIHEKLGQYTSPVAKRCCQDGLTRLPMARTCEQRAARVQQPACRKPFLSCCQFAESLRKKARTRGQVGLARAMELLQEEDLIEEDDIPVRSFFPENWLWKVEEVDRFSQLRLLLPDSLTTWEIHGMSLSKTTGLCVATPARLRVFREFHMHLRLPVSVRRFEQLELRPVLYNYLDSDLTVSVHVSPVEGLCLAGGGGLAQQVQVPAGSARPVGFSVVPIAAAAVSLKVVARGSFDFPVGDAISKILQVEREGALHREEMVYELNPLDPLGRTLEIPGNSDPNIIPEGDFKSFVRVTASDPLEALGSEGALSPGGLASLLRLPQGCAEQTMTLLAPTLAASRYLDKTEQWSMLPPETKDRAVDLIQKGYTRIQEFRKRDGSYGAWLHRDSSTWLTAFVLKILSLAQDQVGGSAEKLQETATWLLSQQRDDGPFHDPCPVIHREMQGGLVGSDETVALTAFVVIALHHGLAVLPDKNSEQLRRVENSISRANTFLGAKATSGLLGSHASAITAYALSLTEAPEDLRRVAHNNLMAMAKDIGDKLYWGSVTTSPSNVLSPTPAPRSPADPIPQAPAMSIETTAYGLLHLLLWEGKAELADQAASWLTRQGSFQGGFRSTQDTVVALDALSAYWIASYTAEEKGLNVTLSSLGRSGLKSHVLQLTNHQVHRLEEELQFSLGSKINVEVRGNSKGTLKVLRSYNVMDMTNTTCQDLQIEVTVMGHVEYTMEAEEDYEDYEYEDLLAGDDPEAHSRPVTPLQLFDGRRNRRRREAPKAAEERESRVQYTVCIWRTGKVGLSGMAIADITLLSGFHALRADLEKLTSLSDRYMSHFETEGPHVLLYFDSVPTSRECVGFGAVQEVPVGLVQPASAILYDYYNPEHKCSVFYGAPRKSKLLSTLCSADVCQCAEGKCPRQRRALERGQQDLEGYRMKFACYSPRVDYGFQVKVLREDSRAAFRLFETRITQVLHFTKDARATADQTRNFLVRASCRLQLEPGKEYLIMGLDGATYDLKGDPQYLLDSNSWIEEMPSERMCQSTRHRTPCAQLNSFLQEYGTQGCQV</sequence>
<comment type="function">
    <text evidence="1">Precursor of non-enzymatic components of the classical, lectin and GZMK complement pathways, which consist in a cascade of proteins that leads to phagocytosis and breakdown of pathogens and signaling that strengthens the adaptive immune system.</text>
</comment>
<comment type="function">
    <molecule>Complement C4b</molecule>
    <text evidence="1">Non-enzymatic component of C3 and C5 convertases. Generated following cleavage by complement proteases (C1S, MASP2 or GZMK, depending on the complement pathway), it covalently attaches to the surface of pathogens, where it acts as an opsonin that marks the surface of antigens for removal. It then recruits the serine protease complement C2b to form the C3 and C5 convertases, which cleave and activate C3 and C5, respectively, the next components of the complement pathways. Complement C4b-A isotype is responsible for effective binding to form amide bonds with immune aggregates or protein antigens, while complement C4b-B isotype catalyzes the transacylation of the thioester carbonyl group to form ester bonds with carbohydrate antigens.</text>
</comment>
<comment type="function">
    <molecule>C4a anaphylatoxin</molecule>
    <text evidence="1">Putative humoral mediator released following cleavage by complement proteases (C1S, MASP2 or GZMK, depending on the complement pathway). While it is strongly similar to anaphylatoxins, its role is unclear. Was reported to act as a mediator of local inflammatory process; however these effects were probably due to contamination with C3a and/C5a anaphylatoxins in biological assays.</text>
</comment>
<comment type="subunit">
    <text evidence="1">In absence of complement activation, circulates in blood as a disulfide-linked trimer of an alpha, beta and gamma chain.</text>
</comment>
<comment type="subunit">
    <molecule>Complement C4b</molecule>
    <text evidence="1">Complement C4b is composed of complement C4b-A, complement C4 beta and complement C4 gamma chains that are associated via disulfide bonds. Non-enzymatic component of the C3 convertase, also named C4bC2b, composed of the serine protease complement C2b (C2), as well as complement C4b. Non-enzymatic component of the C5 convertase, also named C4bC2bC3b, composed of the serine protease complement C2b (C2), complement C3b, as well as complement C4b.</text>
</comment>
<comment type="subcellular location">
    <subcellularLocation>
        <location evidence="1">Secreted</location>
    </subcellularLocation>
</comment>
<comment type="subcellular location">
    <molecule>C4a anaphylatoxin</molecule>
    <subcellularLocation>
        <location evidence="5">Secreted</location>
    </subcellularLocation>
</comment>
<comment type="subcellular location">
    <molecule>Complement C4b</molecule>
    <subcellularLocation>
        <location evidence="1">Secreted</location>
    </subcellularLocation>
    <subcellularLocation>
        <location evidence="1">Cell surface</location>
    </subcellularLocation>
    <text evidence="1">Covalently associated with the surface of pathogens: the internal thioester bond reacts with carbohydrate antigens on the target surface to form amide or ester bonds.</text>
</comment>
<comment type="PTM">
    <text evidence="1">Prior to secretion, the single-chain precursor is enzymatically cleaved by plasminogen (PLG) to yield non-identical chains alpha, beta and gamma. During activation of the complement systems, the alpha chain is cleaved into C4a and C4b by different proteases depending on the complement pathway: C4b stays linked to the beta and gamma chains, while C4a is released in the plasma. The alpha chain is cleaved by C1S to generate C4a and C4b following activation by the classical complement system. The alpha chain is cleaved to generate C4a and C4b by MASP2 following activation by the lectin complement system. The alpha chain is cleaved by GZMK to generate C4a and C4b following activation by the GZMK complement system. Further degradation of C4b by C1 into the inactive fragments C4c and C4d blocks the generation of C3 convertase. The proteolytic cleavages often are incomplete so that many structural forms can be found in plasma.</text>
</comment>
<comment type="PTM">
    <molecule>Complement C4b</molecule>
    <text evidence="1">Upon activation, the internal thioester bond reacts with carbohydrate antigens on the target surface to form amide or ester bonds, leading to covalent association with the surface of pathogens.</text>
</comment>
<comment type="PTM">
    <molecule>Complement C4b</molecule>
    <text evidence="1">Complement C4b interacts with complement C3b via a thioester linkage.</text>
</comment>
<comment type="PTM">
    <text evidence="1">N- and O-glycosylated. O-glycosylated with a core 1 or possibly core 8 glycan.</text>
</comment>
<comment type="miscellaneous">
    <text evidence="6">C4 is a major histocompatibility complex class-III protein.</text>
</comment>
<reference key="1">
    <citation type="journal article" date="2009" name="Genome Biol.">
        <title>A whole-genome assembly of the domestic cow, Bos taurus.</title>
        <authorList>
            <person name="Zimin A.V."/>
            <person name="Delcher A.L."/>
            <person name="Florea L."/>
            <person name="Kelley D.R."/>
            <person name="Schatz M.C."/>
            <person name="Puiu D."/>
            <person name="Hanrahan F."/>
            <person name="Pertea G."/>
            <person name="Van Tassell C.P."/>
            <person name="Sonstegard T.S."/>
            <person name="Marcais G."/>
            <person name="Roberts M."/>
            <person name="Subramanian P."/>
            <person name="Yorke J.A."/>
            <person name="Salzberg S.L."/>
        </authorList>
    </citation>
    <scope>NUCLEOTIDE SEQUENCE [LARGE SCALE GENOMIC DNA]</scope>
    <source>
        <strain>Hereford</strain>
    </source>
</reference>
<reference key="2">
    <citation type="journal article" date="1982" name="Biochem. J.">
        <title>Primary structure of bovine complement activation fragment C4a, the third anaphylatoxin. Purification and complete amino acid sequence.</title>
        <authorList>
            <person name="Smith M.A."/>
            <person name="Gerrie L.M."/>
            <person name="Dunbar B."/>
            <person name="Fothergill J.E."/>
        </authorList>
    </citation>
    <scope>PROTEIN SEQUENCE OF 678-754</scope>
    <scope>SUBCELLULAR LOCATION (C4A ANAPHYLATOXIN)</scope>
</reference>
<reference key="3">
    <citation type="submission" date="1994-10" db="EMBL/GenBank/DDBJ databases">
        <authorList>
            <person name="Groth D.M."/>
        </authorList>
    </citation>
    <scope>NUCLEOTIDE SEQUENCE [MRNA] OF 1372-1741</scope>
    <source>
        <tissue>Liver</tissue>
    </source>
</reference>
<accession>P01030</accession>
<accession>Q27992</accession>
<accession>Q27993</accession>
<feature type="signal peptide" evidence="2">
    <location>
        <begin position="1"/>
        <end position="19"/>
    </location>
</feature>
<feature type="chain" id="PRO_0000462535" description="Complement C4" evidence="2">
    <location>
        <begin position="20"/>
        <end position="1741"/>
    </location>
</feature>
<feature type="chain" id="PRO_0000462536" description="Complement C4 beta chain" evidence="1">
    <location>
        <begin position="20"/>
        <end position="673"/>
    </location>
</feature>
<feature type="propeptide" id="PRO_0000462537" evidence="1">
    <location>
        <begin position="674"/>
        <end position="677"/>
    </location>
</feature>
<feature type="chain" id="PRO_0000005962" description="Complement C4 alpha chain">
    <location>
        <begin position="678"/>
        <end position="1446"/>
    </location>
</feature>
<feature type="chain" id="PRO_0000005963" description="C4a anaphylatoxin" evidence="5">
    <location>
        <begin position="678"/>
        <end position="754"/>
    </location>
</feature>
<feature type="chain" id="PRO_0000462538" description="Complement C4b" evidence="1">
    <location>
        <begin position="755"/>
        <end position="1446"/>
    </location>
</feature>
<feature type="propeptide" id="PRO_0000005964" evidence="1">
    <location>
        <begin position="1447"/>
        <end position="1450"/>
    </location>
</feature>
<feature type="chain" id="PRO_0000005965" description="Complement C4 gamma chain">
    <location>
        <begin position="1451"/>
        <end position="1741"/>
    </location>
</feature>
<feature type="domain" description="Anaphylatoxin-like" evidence="3">
    <location>
        <begin position="700"/>
        <end position="734"/>
    </location>
</feature>
<feature type="domain" description="NTR" evidence="4">
    <location>
        <begin position="1592"/>
        <end position="1739"/>
    </location>
</feature>
<feature type="site" description="Cleavage; by C1S, MASP2 and GZMK" evidence="1">
    <location>
        <begin position="754"/>
        <end position="755"/>
    </location>
</feature>
<feature type="modified residue" description="Phosphoserine" evidence="1">
    <location>
        <position position="916"/>
    </location>
</feature>
<feature type="modified residue" description="Sulfotyrosine" evidence="1">
    <location>
        <position position="1414"/>
    </location>
</feature>
<feature type="modified residue" description="Sulfotyrosine" evidence="1">
    <location>
        <position position="1417"/>
    </location>
</feature>
<feature type="modified residue" description="Sulfotyrosine" evidence="1">
    <location>
        <position position="1419"/>
    </location>
</feature>
<feature type="glycosylation site" description="N-linked (GlcNAc...) asparagine" evidence="2">
    <location>
        <position position="60"/>
    </location>
</feature>
<feature type="glycosylation site" description="N-linked (GlcNAc...) asparagine" evidence="1">
    <location>
        <position position="225"/>
    </location>
</feature>
<feature type="glycosylation site" description="N-linked (GlcNAc...) asparagine" evidence="2">
    <location>
        <position position="326"/>
    </location>
</feature>
<feature type="glycosylation site" description="O-linked (GalNAc...) threonine" evidence="1">
    <location>
        <position position="1241"/>
    </location>
</feature>
<feature type="glycosylation site" description="N-linked (GlcNAc...) asparagine" evidence="2">
    <location>
        <position position="1325"/>
    </location>
</feature>
<feature type="glycosylation site" description="N-linked (GlcNAc...) asparagine" evidence="1">
    <location>
        <position position="1388"/>
    </location>
</feature>
<feature type="disulfide bond" evidence="1">
    <location>
        <begin position="68"/>
        <end position="97"/>
    </location>
</feature>
<feature type="disulfide bond" description="Interchain (with C-820)" evidence="1">
    <location>
        <position position="565"/>
    </location>
</feature>
<feature type="disulfide bond" evidence="1">
    <location>
        <begin position="633"/>
        <end position="667"/>
    </location>
</feature>
<feature type="disulfide bond" evidence="3">
    <location>
        <begin position="700"/>
        <end position="726"/>
    </location>
</feature>
<feature type="disulfide bond" evidence="3">
    <location>
        <begin position="701"/>
        <end position="733"/>
    </location>
</feature>
<feature type="disulfide bond" evidence="3">
    <location>
        <begin position="714"/>
        <end position="734"/>
    </location>
</feature>
<feature type="disulfide bond" description="Interchain (with C-567)" evidence="1">
    <location>
        <position position="818"/>
    </location>
</feature>
<feature type="disulfide bond" description="Interchain (with C-1590)" evidence="1">
    <location>
        <position position="874"/>
    </location>
</feature>
<feature type="disulfide bond" description="Interchain (with C-1566)" evidence="1">
    <location>
        <position position="1391"/>
    </location>
</feature>
<feature type="disulfide bond" evidence="1">
    <location>
        <begin position="1468"/>
        <end position="1532"/>
    </location>
</feature>
<feature type="disulfide bond" description="Interchain (with C-1394)" evidence="1">
    <location>
        <position position="1563"/>
    </location>
</feature>
<feature type="disulfide bond" evidence="1">
    <location>
        <begin position="1580"/>
        <end position="1585"/>
    </location>
</feature>
<feature type="disulfide bond" description="Interchain (with C-876)" evidence="1">
    <location>
        <position position="1587"/>
    </location>
</feature>
<feature type="disulfide bond" evidence="4">
    <location>
        <begin position="1592"/>
        <end position="1670"/>
    </location>
</feature>
<feature type="disulfide bond" evidence="4">
    <location>
        <begin position="1615"/>
        <end position="1739"/>
    </location>
</feature>
<feature type="disulfide bond" evidence="1">
    <location>
        <begin position="1715"/>
        <end position="1724"/>
    </location>
</feature>
<feature type="cross-link" description="Isoglutamyl cysteine thioester (Cys-Gln)" evidence="1">
    <location>
        <begin position="1008"/>
        <end position="1011"/>
    </location>
</feature>
<name>CO4_BOVIN</name>
<proteinExistence type="evidence at protein level"/>
<evidence type="ECO:0000250" key="1">
    <source>
        <dbReference type="UniProtKB" id="P0C0L4"/>
    </source>
</evidence>
<evidence type="ECO:0000255" key="2"/>
<evidence type="ECO:0000255" key="3">
    <source>
        <dbReference type="PROSITE-ProRule" id="PRU00022"/>
    </source>
</evidence>
<evidence type="ECO:0000255" key="4">
    <source>
        <dbReference type="PROSITE-ProRule" id="PRU00295"/>
    </source>
</evidence>
<evidence type="ECO:0000269" key="5">
    <source>
    </source>
</evidence>
<evidence type="ECO:0000305" key="6"/>
<organism>
    <name type="scientific">Bos taurus</name>
    <name type="common">Bovine</name>
    <dbReference type="NCBI Taxonomy" id="9913"/>
    <lineage>
        <taxon>Eukaryota</taxon>
        <taxon>Metazoa</taxon>
        <taxon>Chordata</taxon>
        <taxon>Craniata</taxon>
        <taxon>Vertebrata</taxon>
        <taxon>Euteleostomi</taxon>
        <taxon>Mammalia</taxon>
        <taxon>Eutheria</taxon>
        <taxon>Laurasiatheria</taxon>
        <taxon>Artiodactyla</taxon>
        <taxon>Ruminantia</taxon>
        <taxon>Pecora</taxon>
        <taxon>Bovidae</taxon>
        <taxon>Bovinae</taxon>
        <taxon>Bos</taxon>
    </lineage>
</organism>
<protein>
    <recommendedName>
        <fullName>Complement C4</fullName>
    </recommendedName>
    <component>
        <recommendedName>
            <fullName>Complement C4 beta chain</fullName>
        </recommendedName>
    </component>
    <component>
        <recommendedName>
            <fullName>Complement C4 alpha chain</fullName>
        </recommendedName>
    </component>
    <component>
        <recommendedName>
            <fullName>C4a anaphylatoxin</fullName>
        </recommendedName>
    </component>
    <component>
        <recommendedName>
            <fullName>Complement C4b</fullName>
        </recommendedName>
    </component>
    <component>
        <recommendedName>
            <fullName>Complement C4 gamma chain</fullName>
        </recommendedName>
    </component>
</protein>